<dbReference type="EMBL" id="CP001392">
    <property type="protein sequence ID" value="ACM34007.1"/>
    <property type="molecule type" value="Genomic_DNA"/>
</dbReference>
<dbReference type="RefSeq" id="WP_015913930.1">
    <property type="nucleotide sequence ID" value="NC_011992.1"/>
</dbReference>
<dbReference type="SMR" id="B9MDJ8"/>
<dbReference type="GeneID" id="84680677"/>
<dbReference type="KEGG" id="dia:Dtpsy_2572"/>
<dbReference type="eggNOG" id="COG0484">
    <property type="taxonomic scope" value="Bacteria"/>
</dbReference>
<dbReference type="HOGENOM" id="CLU_017633_0_7_4"/>
<dbReference type="Proteomes" id="UP000000450">
    <property type="component" value="Chromosome"/>
</dbReference>
<dbReference type="GO" id="GO:0005737">
    <property type="term" value="C:cytoplasm"/>
    <property type="evidence" value="ECO:0007669"/>
    <property type="project" value="UniProtKB-SubCell"/>
</dbReference>
<dbReference type="GO" id="GO:0005524">
    <property type="term" value="F:ATP binding"/>
    <property type="evidence" value="ECO:0007669"/>
    <property type="project" value="InterPro"/>
</dbReference>
<dbReference type="GO" id="GO:0031072">
    <property type="term" value="F:heat shock protein binding"/>
    <property type="evidence" value="ECO:0007669"/>
    <property type="project" value="InterPro"/>
</dbReference>
<dbReference type="GO" id="GO:0051082">
    <property type="term" value="F:unfolded protein binding"/>
    <property type="evidence" value="ECO:0007669"/>
    <property type="project" value="UniProtKB-UniRule"/>
</dbReference>
<dbReference type="GO" id="GO:0008270">
    <property type="term" value="F:zinc ion binding"/>
    <property type="evidence" value="ECO:0007669"/>
    <property type="project" value="UniProtKB-UniRule"/>
</dbReference>
<dbReference type="GO" id="GO:0051085">
    <property type="term" value="P:chaperone cofactor-dependent protein refolding"/>
    <property type="evidence" value="ECO:0007669"/>
    <property type="project" value="TreeGrafter"/>
</dbReference>
<dbReference type="GO" id="GO:0006260">
    <property type="term" value="P:DNA replication"/>
    <property type="evidence" value="ECO:0007669"/>
    <property type="project" value="UniProtKB-KW"/>
</dbReference>
<dbReference type="GO" id="GO:0042026">
    <property type="term" value="P:protein refolding"/>
    <property type="evidence" value="ECO:0007669"/>
    <property type="project" value="TreeGrafter"/>
</dbReference>
<dbReference type="GO" id="GO:0009408">
    <property type="term" value="P:response to heat"/>
    <property type="evidence" value="ECO:0007669"/>
    <property type="project" value="InterPro"/>
</dbReference>
<dbReference type="CDD" id="cd06257">
    <property type="entry name" value="DnaJ"/>
    <property type="match status" value="1"/>
</dbReference>
<dbReference type="CDD" id="cd10747">
    <property type="entry name" value="DnaJ_C"/>
    <property type="match status" value="1"/>
</dbReference>
<dbReference type="CDD" id="cd10719">
    <property type="entry name" value="DnaJ_zf"/>
    <property type="match status" value="1"/>
</dbReference>
<dbReference type="FunFam" id="1.10.287.110:FF:000031">
    <property type="entry name" value="Molecular chaperone DnaJ"/>
    <property type="match status" value="1"/>
</dbReference>
<dbReference type="FunFam" id="2.10.230.10:FF:000002">
    <property type="entry name" value="Molecular chaperone DnaJ"/>
    <property type="match status" value="1"/>
</dbReference>
<dbReference type="FunFam" id="2.60.260.20:FF:000004">
    <property type="entry name" value="Molecular chaperone DnaJ"/>
    <property type="match status" value="1"/>
</dbReference>
<dbReference type="Gene3D" id="1.10.287.110">
    <property type="entry name" value="DnaJ domain"/>
    <property type="match status" value="1"/>
</dbReference>
<dbReference type="Gene3D" id="2.10.230.10">
    <property type="entry name" value="Heat shock protein DnaJ, cysteine-rich domain"/>
    <property type="match status" value="1"/>
</dbReference>
<dbReference type="Gene3D" id="2.60.260.20">
    <property type="entry name" value="Urease metallochaperone UreE, N-terminal domain"/>
    <property type="match status" value="2"/>
</dbReference>
<dbReference type="HAMAP" id="MF_01152">
    <property type="entry name" value="DnaJ"/>
    <property type="match status" value="1"/>
</dbReference>
<dbReference type="InterPro" id="IPR012724">
    <property type="entry name" value="DnaJ"/>
</dbReference>
<dbReference type="InterPro" id="IPR002939">
    <property type="entry name" value="DnaJ_C"/>
</dbReference>
<dbReference type="InterPro" id="IPR001623">
    <property type="entry name" value="DnaJ_domain"/>
</dbReference>
<dbReference type="InterPro" id="IPR018253">
    <property type="entry name" value="DnaJ_domain_CS"/>
</dbReference>
<dbReference type="InterPro" id="IPR008971">
    <property type="entry name" value="HSP40/DnaJ_pept-bd"/>
</dbReference>
<dbReference type="InterPro" id="IPR001305">
    <property type="entry name" value="HSP_DnaJ_Cys-rich_dom"/>
</dbReference>
<dbReference type="InterPro" id="IPR036410">
    <property type="entry name" value="HSP_DnaJ_Cys-rich_dom_sf"/>
</dbReference>
<dbReference type="InterPro" id="IPR036869">
    <property type="entry name" value="J_dom_sf"/>
</dbReference>
<dbReference type="NCBIfam" id="TIGR02349">
    <property type="entry name" value="DnaJ_bact"/>
    <property type="match status" value="1"/>
</dbReference>
<dbReference type="NCBIfam" id="NF008035">
    <property type="entry name" value="PRK10767.1"/>
    <property type="match status" value="1"/>
</dbReference>
<dbReference type="PANTHER" id="PTHR43096:SF48">
    <property type="entry name" value="CHAPERONE PROTEIN DNAJ"/>
    <property type="match status" value="1"/>
</dbReference>
<dbReference type="PANTHER" id="PTHR43096">
    <property type="entry name" value="DNAJ HOMOLOG 1, MITOCHONDRIAL-RELATED"/>
    <property type="match status" value="1"/>
</dbReference>
<dbReference type="Pfam" id="PF00226">
    <property type="entry name" value="DnaJ"/>
    <property type="match status" value="1"/>
</dbReference>
<dbReference type="Pfam" id="PF01556">
    <property type="entry name" value="DnaJ_C"/>
    <property type="match status" value="1"/>
</dbReference>
<dbReference type="Pfam" id="PF00684">
    <property type="entry name" value="DnaJ_CXXCXGXG"/>
    <property type="match status" value="1"/>
</dbReference>
<dbReference type="PRINTS" id="PR00625">
    <property type="entry name" value="JDOMAIN"/>
</dbReference>
<dbReference type="SMART" id="SM00271">
    <property type="entry name" value="DnaJ"/>
    <property type="match status" value="1"/>
</dbReference>
<dbReference type="SUPFAM" id="SSF46565">
    <property type="entry name" value="Chaperone J-domain"/>
    <property type="match status" value="1"/>
</dbReference>
<dbReference type="SUPFAM" id="SSF57938">
    <property type="entry name" value="DnaJ/Hsp40 cysteine-rich domain"/>
    <property type="match status" value="1"/>
</dbReference>
<dbReference type="SUPFAM" id="SSF49493">
    <property type="entry name" value="HSP40/DnaJ peptide-binding domain"/>
    <property type="match status" value="2"/>
</dbReference>
<dbReference type="PROSITE" id="PS00636">
    <property type="entry name" value="DNAJ_1"/>
    <property type="match status" value="1"/>
</dbReference>
<dbReference type="PROSITE" id="PS50076">
    <property type="entry name" value="DNAJ_2"/>
    <property type="match status" value="1"/>
</dbReference>
<dbReference type="PROSITE" id="PS51188">
    <property type="entry name" value="ZF_CR"/>
    <property type="match status" value="1"/>
</dbReference>
<organism>
    <name type="scientific">Acidovorax ebreus (strain TPSY)</name>
    <name type="common">Diaphorobacter sp. (strain TPSY)</name>
    <dbReference type="NCBI Taxonomy" id="535289"/>
    <lineage>
        <taxon>Bacteria</taxon>
        <taxon>Pseudomonadati</taxon>
        <taxon>Pseudomonadota</taxon>
        <taxon>Betaproteobacteria</taxon>
        <taxon>Burkholderiales</taxon>
        <taxon>Comamonadaceae</taxon>
        <taxon>Diaphorobacter</taxon>
    </lineage>
</organism>
<gene>
    <name evidence="1" type="primary">dnaJ</name>
    <name type="ordered locus">Dtpsy_2572</name>
</gene>
<keyword id="KW-0143">Chaperone</keyword>
<keyword id="KW-0963">Cytoplasm</keyword>
<keyword id="KW-0235">DNA replication</keyword>
<keyword id="KW-0479">Metal-binding</keyword>
<keyword id="KW-1185">Reference proteome</keyword>
<keyword id="KW-0677">Repeat</keyword>
<keyword id="KW-0346">Stress response</keyword>
<keyword id="KW-0862">Zinc</keyword>
<keyword id="KW-0863">Zinc-finger</keyword>
<name>DNAJ_ACIET</name>
<reference key="1">
    <citation type="submission" date="2009-01" db="EMBL/GenBank/DDBJ databases">
        <title>Complete sequence of Diaphorobacter sp. TPSY.</title>
        <authorList>
            <consortium name="US DOE Joint Genome Institute"/>
            <person name="Lucas S."/>
            <person name="Copeland A."/>
            <person name="Lapidus A."/>
            <person name="Glavina del Rio T."/>
            <person name="Tice H."/>
            <person name="Bruce D."/>
            <person name="Goodwin L."/>
            <person name="Pitluck S."/>
            <person name="Chertkov O."/>
            <person name="Brettin T."/>
            <person name="Detter J.C."/>
            <person name="Han C."/>
            <person name="Larimer F."/>
            <person name="Land M."/>
            <person name="Hauser L."/>
            <person name="Kyrpides N."/>
            <person name="Mikhailova N."/>
            <person name="Coates J.D."/>
        </authorList>
    </citation>
    <scope>NUCLEOTIDE SEQUENCE [LARGE SCALE GENOMIC DNA]</scope>
    <source>
        <strain>TPSY</strain>
    </source>
</reference>
<comment type="function">
    <text evidence="1">Participates actively in the response to hyperosmotic and heat shock by preventing the aggregation of stress-denatured proteins and by disaggregating proteins, also in an autonomous, DnaK-independent fashion. Unfolded proteins bind initially to DnaJ; upon interaction with the DnaJ-bound protein, DnaK hydrolyzes its bound ATP, resulting in the formation of a stable complex. GrpE releases ADP from DnaK; ATP binding to DnaK triggers the release of the substrate protein, thus completing the reaction cycle. Several rounds of ATP-dependent interactions between DnaJ, DnaK and GrpE are required for fully efficient folding. Also involved, together with DnaK and GrpE, in the DNA replication of plasmids through activation of initiation proteins.</text>
</comment>
<comment type="cofactor">
    <cofactor evidence="1">
        <name>Zn(2+)</name>
        <dbReference type="ChEBI" id="CHEBI:29105"/>
    </cofactor>
    <text evidence="1">Binds 2 Zn(2+) ions per monomer.</text>
</comment>
<comment type="subunit">
    <text evidence="1">Homodimer.</text>
</comment>
<comment type="subcellular location">
    <subcellularLocation>
        <location evidence="1">Cytoplasm</location>
    </subcellularLocation>
</comment>
<comment type="domain">
    <text evidence="1">The J domain is necessary and sufficient to stimulate DnaK ATPase activity. Zinc center 1 plays an important role in the autonomous, DnaK-independent chaperone activity of DnaJ. Zinc center 2 is essential for interaction with DnaK and for DnaJ activity.</text>
</comment>
<comment type="similarity">
    <text evidence="1">Belongs to the DnaJ family.</text>
</comment>
<proteinExistence type="inferred from homology"/>
<protein>
    <recommendedName>
        <fullName evidence="1">Chaperone protein DnaJ</fullName>
    </recommendedName>
</protein>
<feature type="chain" id="PRO_1000164258" description="Chaperone protein DnaJ">
    <location>
        <begin position="1"/>
        <end position="376"/>
    </location>
</feature>
<feature type="domain" description="J" evidence="1">
    <location>
        <begin position="5"/>
        <end position="72"/>
    </location>
</feature>
<feature type="repeat" description="CXXCXGXG motif">
    <location>
        <begin position="149"/>
        <end position="156"/>
    </location>
</feature>
<feature type="repeat" description="CXXCXGXG motif">
    <location>
        <begin position="166"/>
        <end position="173"/>
    </location>
</feature>
<feature type="repeat" description="CXXCXGXG motif">
    <location>
        <begin position="188"/>
        <end position="195"/>
    </location>
</feature>
<feature type="repeat" description="CXXCXGXG motif">
    <location>
        <begin position="202"/>
        <end position="209"/>
    </location>
</feature>
<feature type="zinc finger region" description="CR-type" evidence="1">
    <location>
        <begin position="136"/>
        <end position="214"/>
    </location>
</feature>
<feature type="region of interest" description="Disordered" evidence="2">
    <location>
        <begin position="227"/>
        <end position="246"/>
    </location>
</feature>
<feature type="region of interest" description="Disordered" evidence="2">
    <location>
        <begin position="354"/>
        <end position="376"/>
    </location>
</feature>
<feature type="compositionally biased region" description="Gly residues" evidence="2">
    <location>
        <begin position="237"/>
        <end position="246"/>
    </location>
</feature>
<feature type="compositionally biased region" description="Basic and acidic residues" evidence="2">
    <location>
        <begin position="367"/>
        <end position="376"/>
    </location>
</feature>
<feature type="binding site" evidence="1">
    <location>
        <position position="149"/>
    </location>
    <ligand>
        <name>Zn(2+)</name>
        <dbReference type="ChEBI" id="CHEBI:29105"/>
        <label>1</label>
    </ligand>
</feature>
<feature type="binding site" evidence="1">
    <location>
        <position position="152"/>
    </location>
    <ligand>
        <name>Zn(2+)</name>
        <dbReference type="ChEBI" id="CHEBI:29105"/>
        <label>1</label>
    </ligand>
</feature>
<feature type="binding site" evidence="1">
    <location>
        <position position="166"/>
    </location>
    <ligand>
        <name>Zn(2+)</name>
        <dbReference type="ChEBI" id="CHEBI:29105"/>
        <label>2</label>
    </ligand>
</feature>
<feature type="binding site" evidence="1">
    <location>
        <position position="169"/>
    </location>
    <ligand>
        <name>Zn(2+)</name>
        <dbReference type="ChEBI" id="CHEBI:29105"/>
        <label>2</label>
    </ligand>
</feature>
<feature type="binding site" evidence="1">
    <location>
        <position position="188"/>
    </location>
    <ligand>
        <name>Zn(2+)</name>
        <dbReference type="ChEBI" id="CHEBI:29105"/>
        <label>2</label>
    </ligand>
</feature>
<feature type="binding site" evidence="1">
    <location>
        <position position="191"/>
    </location>
    <ligand>
        <name>Zn(2+)</name>
        <dbReference type="ChEBI" id="CHEBI:29105"/>
        <label>2</label>
    </ligand>
</feature>
<feature type="binding site" evidence="1">
    <location>
        <position position="202"/>
    </location>
    <ligand>
        <name>Zn(2+)</name>
        <dbReference type="ChEBI" id="CHEBI:29105"/>
        <label>1</label>
    </ligand>
</feature>
<feature type="binding site" evidence="1">
    <location>
        <position position="205"/>
    </location>
    <ligand>
        <name>Zn(2+)</name>
        <dbReference type="ChEBI" id="CHEBI:29105"/>
        <label>1</label>
    </ligand>
</feature>
<sequence>MSKRDFYEVLGVPKNASDDELKKAYRKLAMKYHPDRNQGDAAKPAEEKFKEAKEAYEILSDAQKRAAYDQYGHAGVDPNMRGGMGGAEGFGGFAEAFGDIFGDMFGGARGRGGRQVYRGNDLSYAMDVTLEEAAKGKEAQIRIPSWESCETCHGSGAKPGTSAKTCGTCQGSGTVQMRQGFFSVQQTCPHCRGTGKIIPEPCTACHGQGRVKKQKTLEVKIPAGIDDGMRIRSTGNGEPGTNGGPPGDLYIEIRIRKHDIFERDGDDLHCQVPVSFITAALGGEIEVPTLQGKAAIDIPEGTQAGKQFRLRGKGIKGVRASYPGDLYCHIIVETPVKLTEHQRKLLKELDESLKKGGAKHSPSTESWTDRLKSFFS</sequence>
<accession>B9MDJ8</accession>
<evidence type="ECO:0000255" key="1">
    <source>
        <dbReference type="HAMAP-Rule" id="MF_01152"/>
    </source>
</evidence>
<evidence type="ECO:0000256" key="2">
    <source>
        <dbReference type="SAM" id="MobiDB-lite"/>
    </source>
</evidence>